<evidence type="ECO:0000255" key="1">
    <source>
        <dbReference type="HAMAP-Rule" id="MF_00036"/>
    </source>
</evidence>
<gene>
    <name evidence="1" type="primary">alaS</name>
    <name type="ordered locus">COXBURSA331_A0883</name>
</gene>
<feature type="chain" id="PRO_0000347577" description="Alanine--tRNA ligase">
    <location>
        <begin position="1"/>
        <end position="865"/>
    </location>
</feature>
<feature type="binding site" evidence="1">
    <location>
        <position position="552"/>
    </location>
    <ligand>
        <name>Zn(2+)</name>
        <dbReference type="ChEBI" id="CHEBI:29105"/>
    </ligand>
</feature>
<feature type="binding site" evidence="1">
    <location>
        <position position="556"/>
    </location>
    <ligand>
        <name>Zn(2+)</name>
        <dbReference type="ChEBI" id="CHEBI:29105"/>
    </ligand>
</feature>
<feature type="binding site" evidence="1">
    <location>
        <position position="654"/>
    </location>
    <ligand>
        <name>Zn(2+)</name>
        <dbReference type="ChEBI" id="CHEBI:29105"/>
    </ligand>
</feature>
<feature type="binding site" evidence="1">
    <location>
        <position position="658"/>
    </location>
    <ligand>
        <name>Zn(2+)</name>
        <dbReference type="ChEBI" id="CHEBI:29105"/>
    </ligand>
</feature>
<keyword id="KW-0030">Aminoacyl-tRNA synthetase</keyword>
<keyword id="KW-0067">ATP-binding</keyword>
<keyword id="KW-0963">Cytoplasm</keyword>
<keyword id="KW-0436">Ligase</keyword>
<keyword id="KW-0479">Metal-binding</keyword>
<keyword id="KW-0547">Nucleotide-binding</keyword>
<keyword id="KW-0648">Protein biosynthesis</keyword>
<keyword id="KW-0694">RNA-binding</keyword>
<keyword id="KW-0820">tRNA-binding</keyword>
<keyword id="KW-0862">Zinc</keyword>
<comment type="function">
    <text evidence="1">Catalyzes the attachment of alanine to tRNA(Ala) in a two-step reaction: alanine is first activated by ATP to form Ala-AMP and then transferred to the acceptor end of tRNA(Ala). Also edits incorrectly charged Ser-tRNA(Ala) and Gly-tRNA(Ala) via its editing domain.</text>
</comment>
<comment type="catalytic activity">
    <reaction evidence="1">
        <text>tRNA(Ala) + L-alanine + ATP = L-alanyl-tRNA(Ala) + AMP + diphosphate</text>
        <dbReference type="Rhea" id="RHEA:12540"/>
        <dbReference type="Rhea" id="RHEA-COMP:9657"/>
        <dbReference type="Rhea" id="RHEA-COMP:9923"/>
        <dbReference type="ChEBI" id="CHEBI:30616"/>
        <dbReference type="ChEBI" id="CHEBI:33019"/>
        <dbReference type="ChEBI" id="CHEBI:57972"/>
        <dbReference type="ChEBI" id="CHEBI:78442"/>
        <dbReference type="ChEBI" id="CHEBI:78497"/>
        <dbReference type="ChEBI" id="CHEBI:456215"/>
        <dbReference type="EC" id="6.1.1.7"/>
    </reaction>
</comment>
<comment type="cofactor">
    <cofactor evidence="1">
        <name>Zn(2+)</name>
        <dbReference type="ChEBI" id="CHEBI:29105"/>
    </cofactor>
    <text evidence="1">Binds 1 zinc ion per subunit.</text>
</comment>
<comment type="subcellular location">
    <subcellularLocation>
        <location evidence="1">Cytoplasm</location>
    </subcellularLocation>
</comment>
<comment type="domain">
    <text evidence="1">Consists of three domains; the N-terminal catalytic domain, the editing domain and the C-terminal C-Ala domain. The editing domain removes incorrectly charged amino acids, while the C-Ala domain, along with tRNA(Ala), serves as a bridge to cooperatively bring together the editing and aminoacylation centers thus stimulating deacylation of misacylated tRNAs.</text>
</comment>
<comment type="similarity">
    <text evidence="1">Belongs to the class-II aminoacyl-tRNA synthetase family.</text>
</comment>
<name>SYA_COXBR</name>
<protein>
    <recommendedName>
        <fullName evidence="1">Alanine--tRNA ligase</fullName>
        <ecNumber evidence="1">6.1.1.7</ecNumber>
    </recommendedName>
    <alternativeName>
        <fullName evidence="1">Alanyl-tRNA synthetase</fullName>
        <shortName evidence="1">AlaRS</shortName>
    </alternativeName>
</protein>
<dbReference type="EC" id="6.1.1.7" evidence="1"/>
<dbReference type="EMBL" id="CP000890">
    <property type="protein sequence ID" value="ABX78467.1"/>
    <property type="molecule type" value="Genomic_DNA"/>
</dbReference>
<dbReference type="RefSeq" id="WP_012220353.1">
    <property type="nucleotide sequence ID" value="NC_010117.1"/>
</dbReference>
<dbReference type="SMR" id="A9NCN7"/>
<dbReference type="KEGG" id="cbs:COXBURSA331_A0883"/>
<dbReference type="HOGENOM" id="CLU_004485_1_1_6"/>
<dbReference type="GO" id="GO:0005829">
    <property type="term" value="C:cytosol"/>
    <property type="evidence" value="ECO:0007669"/>
    <property type="project" value="TreeGrafter"/>
</dbReference>
<dbReference type="GO" id="GO:0004813">
    <property type="term" value="F:alanine-tRNA ligase activity"/>
    <property type="evidence" value="ECO:0007669"/>
    <property type="project" value="UniProtKB-UniRule"/>
</dbReference>
<dbReference type="GO" id="GO:0002161">
    <property type="term" value="F:aminoacyl-tRNA deacylase activity"/>
    <property type="evidence" value="ECO:0007669"/>
    <property type="project" value="TreeGrafter"/>
</dbReference>
<dbReference type="GO" id="GO:0005524">
    <property type="term" value="F:ATP binding"/>
    <property type="evidence" value="ECO:0007669"/>
    <property type="project" value="UniProtKB-UniRule"/>
</dbReference>
<dbReference type="GO" id="GO:0000049">
    <property type="term" value="F:tRNA binding"/>
    <property type="evidence" value="ECO:0007669"/>
    <property type="project" value="UniProtKB-KW"/>
</dbReference>
<dbReference type="GO" id="GO:0008270">
    <property type="term" value="F:zinc ion binding"/>
    <property type="evidence" value="ECO:0007669"/>
    <property type="project" value="UniProtKB-UniRule"/>
</dbReference>
<dbReference type="GO" id="GO:0006419">
    <property type="term" value="P:alanyl-tRNA aminoacylation"/>
    <property type="evidence" value="ECO:0007669"/>
    <property type="project" value="UniProtKB-UniRule"/>
</dbReference>
<dbReference type="GO" id="GO:0045892">
    <property type="term" value="P:negative regulation of DNA-templated transcription"/>
    <property type="evidence" value="ECO:0007669"/>
    <property type="project" value="TreeGrafter"/>
</dbReference>
<dbReference type="CDD" id="cd00673">
    <property type="entry name" value="AlaRS_core"/>
    <property type="match status" value="1"/>
</dbReference>
<dbReference type="FunFam" id="2.40.30.130:FF:000001">
    <property type="entry name" value="Alanine--tRNA ligase"/>
    <property type="match status" value="1"/>
</dbReference>
<dbReference type="FunFam" id="3.10.310.40:FF:000001">
    <property type="entry name" value="Alanine--tRNA ligase"/>
    <property type="match status" value="1"/>
</dbReference>
<dbReference type="FunFam" id="3.30.54.20:FF:000001">
    <property type="entry name" value="Alanine--tRNA ligase"/>
    <property type="match status" value="1"/>
</dbReference>
<dbReference type="FunFam" id="3.30.930.10:FF:000004">
    <property type="entry name" value="Alanine--tRNA ligase"/>
    <property type="match status" value="1"/>
</dbReference>
<dbReference type="FunFam" id="3.30.980.10:FF:000004">
    <property type="entry name" value="Alanine--tRNA ligase, cytoplasmic"/>
    <property type="match status" value="1"/>
</dbReference>
<dbReference type="Gene3D" id="2.40.30.130">
    <property type="match status" value="1"/>
</dbReference>
<dbReference type="Gene3D" id="3.10.310.40">
    <property type="match status" value="1"/>
</dbReference>
<dbReference type="Gene3D" id="3.30.54.20">
    <property type="match status" value="1"/>
</dbReference>
<dbReference type="Gene3D" id="6.10.250.550">
    <property type="match status" value="1"/>
</dbReference>
<dbReference type="Gene3D" id="3.30.930.10">
    <property type="entry name" value="Bira Bifunctional Protein, Domain 2"/>
    <property type="match status" value="1"/>
</dbReference>
<dbReference type="Gene3D" id="3.30.980.10">
    <property type="entry name" value="Threonyl-trna Synthetase, Chain A, domain 2"/>
    <property type="match status" value="1"/>
</dbReference>
<dbReference type="HAMAP" id="MF_00036_B">
    <property type="entry name" value="Ala_tRNA_synth_B"/>
    <property type="match status" value="1"/>
</dbReference>
<dbReference type="InterPro" id="IPR045864">
    <property type="entry name" value="aa-tRNA-synth_II/BPL/LPL"/>
</dbReference>
<dbReference type="InterPro" id="IPR002318">
    <property type="entry name" value="Ala-tRNA-lgiase_IIc"/>
</dbReference>
<dbReference type="InterPro" id="IPR018162">
    <property type="entry name" value="Ala-tRNA-ligase_IIc_anticod-bd"/>
</dbReference>
<dbReference type="InterPro" id="IPR018165">
    <property type="entry name" value="Ala-tRNA-synth_IIc_core"/>
</dbReference>
<dbReference type="InterPro" id="IPR018164">
    <property type="entry name" value="Ala-tRNA-synth_IIc_N"/>
</dbReference>
<dbReference type="InterPro" id="IPR050058">
    <property type="entry name" value="Ala-tRNA_ligase"/>
</dbReference>
<dbReference type="InterPro" id="IPR023033">
    <property type="entry name" value="Ala_tRNA_ligase_euk/bac"/>
</dbReference>
<dbReference type="InterPro" id="IPR003156">
    <property type="entry name" value="DHHA1_dom"/>
</dbReference>
<dbReference type="InterPro" id="IPR018163">
    <property type="entry name" value="Thr/Ala-tRNA-synth_IIc_edit"/>
</dbReference>
<dbReference type="InterPro" id="IPR009000">
    <property type="entry name" value="Transl_B-barrel_sf"/>
</dbReference>
<dbReference type="InterPro" id="IPR012947">
    <property type="entry name" value="tRNA_SAD"/>
</dbReference>
<dbReference type="NCBIfam" id="TIGR00344">
    <property type="entry name" value="alaS"/>
    <property type="match status" value="1"/>
</dbReference>
<dbReference type="PANTHER" id="PTHR11777:SF9">
    <property type="entry name" value="ALANINE--TRNA LIGASE, CYTOPLASMIC"/>
    <property type="match status" value="1"/>
</dbReference>
<dbReference type="PANTHER" id="PTHR11777">
    <property type="entry name" value="ALANYL-TRNA SYNTHETASE"/>
    <property type="match status" value="1"/>
</dbReference>
<dbReference type="Pfam" id="PF02272">
    <property type="entry name" value="DHHA1"/>
    <property type="match status" value="1"/>
</dbReference>
<dbReference type="Pfam" id="PF01411">
    <property type="entry name" value="tRNA-synt_2c"/>
    <property type="match status" value="1"/>
</dbReference>
<dbReference type="Pfam" id="PF07973">
    <property type="entry name" value="tRNA_SAD"/>
    <property type="match status" value="1"/>
</dbReference>
<dbReference type="PRINTS" id="PR00980">
    <property type="entry name" value="TRNASYNTHALA"/>
</dbReference>
<dbReference type="SMART" id="SM00863">
    <property type="entry name" value="tRNA_SAD"/>
    <property type="match status" value="1"/>
</dbReference>
<dbReference type="SUPFAM" id="SSF55681">
    <property type="entry name" value="Class II aaRS and biotin synthetases"/>
    <property type="match status" value="1"/>
</dbReference>
<dbReference type="SUPFAM" id="SSF101353">
    <property type="entry name" value="Putative anticodon-binding domain of alanyl-tRNA synthetase (AlaRS)"/>
    <property type="match status" value="1"/>
</dbReference>
<dbReference type="SUPFAM" id="SSF55186">
    <property type="entry name" value="ThrRS/AlaRS common domain"/>
    <property type="match status" value="1"/>
</dbReference>
<dbReference type="SUPFAM" id="SSF50447">
    <property type="entry name" value="Translation proteins"/>
    <property type="match status" value="1"/>
</dbReference>
<dbReference type="PROSITE" id="PS50860">
    <property type="entry name" value="AA_TRNA_LIGASE_II_ALA"/>
    <property type="match status" value="1"/>
</dbReference>
<accession>A9NCN7</accession>
<reference key="1">
    <citation type="submission" date="2007-11" db="EMBL/GenBank/DDBJ databases">
        <title>Genome sequencing of phylogenetically and phenotypically diverse Coxiella burnetii isolates.</title>
        <authorList>
            <person name="Seshadri R."/>
            <person name="Samuel J.E."/>
        </authorList>
    </citation>
    <scope>NUCLEOTIDE SEQUENCE [LARGE SCALE GENOMIC DNA]</scope>
    <source>
        <strain>RSA 331 / Henzerling II</strain>
    </source>
</reference>
<proteinExistence type="inferred from homology"/>
<sequence length="865" mass="97701">MNSNQLRETFLNYFKQLDHEVVPGSSLIPENDPTLLFTNAGMVQFKDVFLGVETRPYQRAVSIQPCMRAGGKHNDLENVGYTARHHTFFEMLGNFSFGDYFKRDAIKFAWDFLTNVLKLPPQRLWVTVFQDDFESESIWLKEMKINPERFSRCGEKDNFWQMRDTGPCGPCTEIFYDHGPTISGGPPGSAEADGDRYVEIWNLVFMQYNRDAKGNLLPLAKPSVDTGMGLERLTAVMQGVHDNYDIDLFQYLLKALRTLLKTEDLHNTSMRVIVDHIRSVAFLIADGVIPSNEGRGYVLRRIIRRAVRHGYKLGQEEPFFYQLTKPLLEEMGGAYPLLRKSQALIEQTIKQEEIQFSNTLTKGLKILDHEMAGLPSRQIPGNLIFQLYDTYGFPPDLTADIARERDFVMDYAGFDKAMERQREQSQQAHQFVANYAQKASIGGETQFVGYETLNSQANVISLLQNDQPINRLNESEKGVVVLDRTPFYAESGGQVGDQGFLYFEKGSFRVKDTKKQGDIYLHIGEMLQGHLNVKDKVRAEVDVSRFDIMRNHSATHLLHEALRRVLGERVMQKGSLVEAKRLRFDFSHAKPLTPEELQAVERLVNQQIQANLLSTIEVMTPEEAKKKGALALFGERYGKEVRVLEMGDFSTEICGGTHTERTGEIGLFKIVSESGCAAGIRRIEALTGKAALDYIESAEQQLRSLSDLLKTNRKNLAAKLSQILEDHRKLEKELAKLKQRLASQQLESLINQVVDVHDIRTLAIRLEAVDRETLRAIVDQLKQKLGKAAIVLATIEEGRIQLVAGVTKNCLEHFNATELLAPIAEKVGGRSGGRPDLAQGAGERPENLEAALAAVPKWIEKKLKE</sequence>
<organism>
    <name type="scientific">Coxiella burnetii (strain RSA 331 / Henzerling II)</name>
    <dbReference type="NCBI Taxonomy" id="360115"/>
    <lineage>
        <taxon>Bacteria</taxon>
        <taxon>Pseudomonadati</taxon>
        <taxon>Pseudomonadota</taxon>
        <taxon>Gammaproteobacteria</taxon>
        <taxon>Legionellales</taxon>
        <taxon>Coxiellaceae</taxon>
        <taxon>Coxiella</taxon>
    </lineage>
</organism>